<comment type="function">
    <text evidence="1">This protein is involved in the repair of mismatches in DNA. It is required for dam-dependent methyl-directed DNA mismatch repair. May act as a 'molecular matchmaker', a protein that promotes the formation of a stable complex between two or more DNA-binding proteins in an ATP-dependent manner without itself being part of a final effector complex.</text>
</comment>
<comment type="similarity">
    <text evidence="1">Belongs to the DNA mismatch repair MutL/HexB family.</text>
</comment>
<name>MUTL_EDWI9</name>
<feature type="chain" id="PRO_1000203385" description="DNA mismatch repair protein MutL">
    <location>
        <begin position="1"/>
        <end position="639"/>
    </location>
</feature>
<feature type="region of interest" description="Disordered" evidence="2">
    <location>
        <begin position="336"/>
        <end position="392"/>
    </location>
</feature>
<feature type="compositionally biased region" description="Basic and acidic residues" evidence="2">
    <location>
        <begin position="349"/>
        <end position="358"/>
    </location>
</feature>
<feature type="compositionally biased region" description="Low complexity" evidence="2">
    <location>
        <begin position="370"/>
        <end position="392"/>
    </location>
</feature>
<proteinExistence type="inferred from homology"/>
<evidence type="ECO:0000255" key="1">
    <source>
        <dbReference type="HAMAP-Rule" id="MF_00149"/>
    </source>
</evidence>
<evidence type="ECO:0000256" key="2">
    <source>
        <dbReference type="SAM" id="MobiDB-lite"/>
    </source>
</evidence>
<protein>
    <recommendedName>
        <fullName evidence="1">DNA mismatch repair protein MutL</fullName>
    </recommendedName>
</protein>
<accession>C5BDM9</accession>
<gene>
    <name evidence="1" type="primary">mutL</name>
    <name type="ordered locus">NT01EI_0407</name>
</gene>
<organism>
    <name type="scientific">Edwardsiella ictaluri (strain 93-146)</name>
    <dbReference type="NCBI Taxonomy" id="634503"/>
    <lineage>
        <taxon>Bacteria</taxon>
        <taxon>Pseudomonadati</taxon>
        <taxon>Pseudomonadota</taxon>
        <taxon>Gammaproteobacteria</taxon>
        <taxon>Enterobacterales</taxon>
        <taxon>Hafniaceae</taxon>
        <taxon>Edwardsiella</taxon>
    </lineage>
</organism>
<sequence>MPIQILPPQLANQIAAGEVVERPASVVKELVENSLDAGATRIDIDIERGGAKLIRIRDNGGGIGKAELALALARHATSKISTLDDLEAIVSLGFRGEALASISSVSRLTMTSRPEGQAEAWQAYAEGREMAVMVKPSAHPVGTTVEVLDLFYNTPARRKFLRTEKTEFAHIDEVVRRIALARFDITLTLQHNGKTVRQYRAVKEGDARERRLGAICGPVFVQHALALTWRHDELAIHGWVAAPQAIRQIGELQYCYVNGRMMRDRLITHAIRQAYQDRLSDEMPPAYVLYLEIDPRQVDVNVHPAKHEVRFHQARLVHDFIYQAVVEVLQQAQVASAHDDPTPAISGAARDEEPRGVENRASAGENRFNRPASSPVASAPRPAHVAAPRMPAGDIFRRREGELYQRLLAANPAPAAETDSAFVAAPGAPVTVAGPPAVAVSTAAENGAPGDSFGRVLTLCADGVALTECRSGVALVSLFHARRCLLRAQLQPPDEGLKAQPLLVPLRLTLEAAERQALKTQQPLLQQMGLRLQPERQHALLHAVPLPLRQQNLPRLIPQMLRYLATASVCDAASLADWLAAHWHSADEAPWTVAQAVQLLADLERLCPQLVQSPPRALLQPLDLQPGVDRLRQEEQLNE</sequence>
<keyword id="KW-0227">DNA damage</keyword>
<keyword id="KW-0234">DNA repair</keyword>
<dbReference type="EMBL" id="CP001600">
    <property type="protein sequence ID" value="ACR67645.1"/>
    <property type="molecule type" value="Genomic_DNA"/>
</dbReference>
<dbReference type="RefSeq" id="WP_015869851.1">
    <property type="nucleotide sequence ID" value="NZ_CP169062.1"/>
</dbReference>
<dbReference type="SMR" id="C5BDM9"/>
<dbReference type="STRING" id="67780.B6E78_12810"/>
<dbReference type="GeneID" id="69537497"/>
<dbReference type="KEGG" id="eic:NT01EI_0407"/>
<dbReference type="PATRIC" id="fig|634503.3.peg.367"/>
<dbReference type="HOGENOM" id="CLU_004131_5_1_6"/>
<dbReference type="OrthoDB" id="9763467at2"/>
<dbReference type="Proteomes" id="UP000001485">
    <property type="component" value="Chromosome"/>
</dbReference>
<dbReference type="GO" id="GO:0032300">
    <property type="term" value="C:mismatch repair complex"/>
    <property type="evidence" value="ECO:0007669"/>
    <property type="project" value="InterPro"/>
</dbReference>
<dbReference type="GO" id="GO:0005524">
    <property type="term" value="F:ATP binding"/>
    <property type="evidence" value="ECO:0007669"/>
    <property type="project" value="InterPro"/>
</dbReference>
<dbReference type="GO" id="GO:0016887">
    <property type="term" value="F:ATP hydrolysis activity"/>
    <property type="evidence" value="ECO:0007669"/>
    <property type="project" value="InterPro"/>
</dbReference>
<dbReference type="GO" id="GO:0140664">
    <property type="term" value="F:ATP-dependent DNA damage sensor activity"/>
    <property type="evidence" value="ECO:0007669"/>
    <property type="project" value="InterPro"/>
</dbReference>
<dbReference type="GO" id="GO:0030983">
    <property type="term" value="F:mismatched DNA binding"/>
    <property type="evidence" value="ECO:0007669"/>
    <property type="project" value="InterPro"/>
</dbReference>
<dbReference type="GO" id="GO:0006298">
    <property type="term" value="P:mismatch repair"/>
    <property type="evidence" value="ECO:0007669"/>
    <property type="project" value="UniProtKB-UniRule"/>
</dbReference>
<dbReference type="CDD" id="cd16926">
    <property type="entry name" value="HATPase_MutL-MLH-PMS-like"/>
    <property type="match status" value="1"/>
</dbReference>
<dbReference type="CDD" id="cd03482">
    <property type="entry name" value="MutL_Trans_MutL"/>
    <property type="match status" value="1"/>
</dbReference>
<dbReference type="FunFam" id="3.30.230.10:FF:000013">
    <property type="entry name" value="DNA mismatch repair endonuclease MutL"/>
    <property type="match status" value="1"/>
</dbReference>
<dbReference type="FunFam" id="3.30.565.10:FF:000003">
    <property type="entry name" value="DNA mismatch repair endonuclease MutL"/>
    <property type="match status" value="1"/>
</dbReference>
<dbReference type="Gene3D" id="3.30.230.10">
    <property type="match status" value="1"/>
</dbReference>
<dbReference type="Gene3D" id="3.30.565.10">
    <property type="entry name" value="Histidine kinase-like ATPase, C-terminal domain"/>
    <property type="match status" value="1"/>
</dbReference>
<dbReference type="Gene3D" id="3.30.1540.20">
    <property type="entry name" value="MutL, C-terminal domain, dimerisation subdomain"/>
    <property type="match status" value="1"/>
</dbReference>
<dbReference type="Gene3D" id="3.30.1370.100">
    <property type="entry name" value="MutL, C-terminal domain, regulatory subdomain"/>
    <property type="match status" value="1"/>
</dbReference>
<dbReference type="HAMAP" id="MF_00149">
    <property type="entry name" value="DNA_mis_repair"/>
    <property type="match status" value="1"/>
</dbReference>
<dbReference type="InterPro" id="IPR014762">
    <property type="entry name" value="DNA_mismatch_repair_CS"/>
</dbReference>
<dbReference type="InterPro" id="IPR020667">
    <property type="entry name" value="DNA_mismatch_repair_MutL"/>
</dbReference>
<dbReference type="InterPro" id="IPR013507">
    <property type="entry name" value="DNA_mismatch_S5_2-like"/>
</dbReference>
<dbReference type="InterPro" id="IPR036890">
    <property type="entry name" value="HATPase_C_sf"/>
</dbReference>
<dbReference type="InterPro" id="IPR002099">
    <property type="entry name" value="MutL/Mlh/PMS"/>
</dbReference>
<dbReference type="InterPro" id="IPR038973">
    <property type="entry name" value="MutL/Mlh/Pms-like"/>
</dbReference>
<dbReference type="InterPro" id="IPR014790">
    <property type="entry name" value="MutL_C"/>
</dbReference>
<dbReference type="InterPro" id="IPR042120">
    <property type="entry name" value="MutL_C_dimsub"/>
</dbReference>
<dbReference type="InterPro" id="IPR042121">
    <property type="entry name" value="MutL_C_regsub"/>
</dbReference>
<dbReference type="InterPro" id="IPR037198">
    <property type="entry name" value="MutL_C_sf"/>
</dbReference>
<dbReference type="InterPro" id="IPR020568">
    <property type="entry name" value="Ribosomal_Su5_D2-typ_SF"/>
</dbReference>
<dbReference type="InterPro" id="IPR014721">
    <property type="entry name" value="Ribsml_uS5_D2-typ_fold_subgr"/>
</dbReference>
<dbReference type="NCBIfam" id="TIGR00585">
    <property type="entry name" value="mutl"/>
    <property type="match status" value="1"/>
</dbReference>
<dbReference type="NCBIfam" id="NF000948">
    <property type="entry name" value="PRK00095.1-1"/>
    <property type="match status" value="1"/>
</dbReference>
<dbReference type="PANTHER" id="PTHR10073">
    <property type="entry name" value="DNA MISMATCH REPAIR PROTEIN MLH, PMS, MUTL"/>
    <property type="match status" value="1"/>
</dbReference>
<dbReference type="PANTHER" id="PTHR10073:SF12">
    <property type="entry name" value="DNA MISMATCH REPAIR PROTEIN MLH1"/>
    <property type="match status" value="1"/>
</dbReference>
<dbReference type="Pfam" id="PF01119">
    <property type="entry name" value="DNA_mis_repair"/>
    <property type="match status" value="1"/>
</dbReference>
<dbReference type="Pfam" id="PF13589">
    <property type="entry name" value="HATPase_c_3"/>
    <property type="match status" value="1"/>
</dbReference>
<dbReference type="Pfam" id="PF08676">
    <property type="entry name" value="MutL_C"/>
    <property type="match status" value="1"/>
</dbReference>
<dbReference type="SMART" id="SM01340">
    <property type="entry name" value="DNA_mis_repair"/>
    <property type="match status" value="1"/>
</dbReference>
<dbReference type="SMART" id="SM00853">
    <property type="entry name" value="MutL_C"/>
    <property type="match status" value="1"/>
</dbReference>
<dbReference type="SUPFAM" id="SSF55874">
    <property type="entry name" value="ATPase domain of HSP90 chaperone/DNA topoisomerase II/histidine kinase"/>
    <property type="match status" value="1"/>
</dbReference>
<dbReference type="SUPFAM" id="SSF118116">
    <property type="entry name" value="DNA mismatch repair protein MutL"/>
    <property type="match status" value="1"/>
</dbReference>
<dbReference type="SUPFAM" id="SSF54211">
    <property type="entry name" value="Ribosomal protein S5 domain 2-like"/>
    <property type="match status" value="1"/>
</dbReference>
<dbReference type="PROSITE" id="PS00058">
    <property type="entry name" value="DNA_MISMATCH_REPAIR_1"/>
    <property type="match status" value="1"/>
</dbReference>
<reference key="1">
    <citation type="submission" date="2009-03" db="EMBL/GenBank/DDBJ databases">
        <title>Complete genome sequence of Edwardsiella ictaluri 93-146.</title>
        <authorList>
            <person name="Williams M.L."/>
            <person name="Gillaspy A.F."/>
            <person name="Dyer D.W."/>
            <person name="Thune R.L."/>
            <person name="Waldbieser G.C."/>
            <person name="Schuster S.C."/>
            <person name="Gipson J."/>
            <person name="Zaitshik J."/>
            <person name="Landry C."/>
            <person name="Lawrence M.L."/>
        </authorList>
    </citation>
    <scope>NUCLEOTIDE SEQUENCE [LARGE SCALE GENOMIC DNA]</scope>
    <source>
        <strain>93-146</strain>
    </source>
</reference>